<feature type="chain" id="PRO_1000054553" description="Large ribosomal subunit protein uL15">
    <location>
        <begin position="1"/>
        <end position="146"/>
    </location>
</feature>
<feature type="region of interest" description="Disordered" evidence="2">
    <location>
        <begin position="1"/>
        <end position="51"/>
    </location>
</feature>
<feature type="compositionally biased region" description="Gly residues" evidence="2">
    <location>
        <begin position="23"/>
        <end position="35"/>
    </location>
</feature>
<feature type="compositionally biased region" description="Gly residues" evidence="2">
    <location>
        <begin position="42"/>
        <end position="51"/>
    </location>
</feature>
<evidence type="ECO:0000255" key="1">
    <source>
        <dbReference type="HAMAP-Rule" id="MF_01341"/>
    </source>
</evidence>
<evidence type="ECO:0000256" key="2">
    <source>
        <dbReference type="SAM" id="MobiDB-lite"/>
    </source>
</evidence>
<evidence type="ECO:0000305" key="3"/>
<gene>
    <name evidence="1" type="primary">rplO</name>
    <name type="ordered locus">SSA_0126</name>
</gene>
<protein>
    <recommendedName>
        <fullName evidence="1">Large ribosomal subunit protein uL15</fullName>
    </recommendedName>
    <alternativeName>
        <fullName evidence="3">50S ribosomal protein L15</fullName>
    </alternativeName>
</protein>
<sequence length="146" mass="15457">MKLHELQPAAGSRKVRNRVGRGTSSGNGKTSGRGQKGQKARSGGGVRLGFEGGQTPLFRRLPKRGFLNINRKEYAIVNLDQLNAFEDGAEVTPVVLIEAGIVKAEKSGIKILGNGELTKKLTVKAAKFSKSAEEAITAKGGSVEVI</sequence>
<organism>
    <name type="scientific">Streptococcus sanguinis (strain SK36)</name>
    <dbReference type="NCBI Taxonomy" id="388919"/>
    <lineage>
        <taxon>Bacteria</taxon>
        <taxon>Bacillati</taxon>
        <taxon>Bacillota</taxon>
        <taxon>Bacilli</taxon>
        <taxon>Lactobacillales</taxon>
        <taxon>Streptococcaceae</taxon>
        <taxon>Streptococcus</taxon>
    </lineage>
</organism>
<reference key="1">
    <citation type="journal article" date="2007" name="J. Bacteriol.">
        <title>Genome of the opportunistic pathogen Streptococcus sanguinis.</title>
        <authorList>
            <person name="Xu P."/>
            <person name="Alves J.M."/>
            <person name="Kitten T."/>
            <person name="Brown A."/>
            <person name="Chen Z."/>
            <person name="Ozaki L.S."/>
            <person name="Manque P."/>
            <person name="Ge X."/>
            <person name="Serrano M.G."/>
            <person name="Puiu D."/>
            <person name="Hendricks S."/>
            <person name="Wang Y."/>
            <person name="Chaplin M.D."/>
            <person name="Akan D."/>
            <person name="Paik S."/>
            <person name="Peterson D.L."/>
            <person name="Macrina F.L."/>
            <person name="Buck G.A."/>
        </authorList>
    </citation>
    <scope>NUCLEOTIDE SEQUENCE [LARGE SCALE GENOMIC DNA]</scope>
    <source>
        <strain>SK36</strain>
    </source>
</reference>
<proteinExistence type="inferred from homology"/>
<dbReference type="EMBL" id="CP000387">
    <property type="protein sequence ID" value="ABN43588.1"/>
    <property type="molecule type" value="Genomic_DNA"/>
</dbReference>
<dbReference type="RefSeq" id="WP_002901833.1">
    <property type="nucleotide sequence ID" value="NZ_CAXTYR010000005.1"/>
</dbReference>
<dbReference type="RefSeq" id="YP_001034138.1">
    <property type="nucleotide sequence ID" value="NC_009009.1"/>
</dbReference>
<dbReference type="SMR" id="A3CK83"/>
<dbReference type="STRING" id="388919.SSA_0126"/>
<dbReference type="GeneID" id="48426566"/>
<dbReference type="KEGG" id="ssa:SSA_0126"/>
<dbReference type="PATRIC" id="fig|388919.9.peg.120"/>
<dbReference type="eggNOG" id="COG0200">
    <property type="taxonomic scope" value="Bacteria"/>
</dbReference>
<dbReference type="HOGENOM" id="CLU_055188_4_2_9"/>
<dbReference type="OrthoDB" id="9810293at2"/>
<dbReference type="Proteomes" id="UP000002148">
    <property type="component" value="Chromosome"/>
</dbReference>
<dbReference type="GO" id="GO:0022625">
    <property type="term" value="C:cytosolic large ribosomal subunit"/>
    <property type="evidence" value="ECO:0007669"/>
    <property type="project" value="TreeGrafter"/>
</dbReference>
<dbReference type="GO" id="GO:0019843">
    <property type="term" value="F:rRNA binding"/>
    <property type="evidence" value="ECO:0007669"/>
    <property type="project" value="UniProtKB-UniRule"/>
</dbReference>
<dbReference type="GO" id="GO:0003735">
    <property type="term" value="F:structural constituent of ribosome"/>
    <property type="evidence" value="ECO:0007669"/>
    <property type="project" value="InterPro"/>
</dbReference>
<dbReference type="GO" id="GO:0006412">
    <property type="term" value="P:translation"/>
    <property type="evidence" value="ECO:0007669"/>
    <property type="project" value="UniProtKB-UniRule"/>
</dbReference>
<dbReference type="FunFam" id="3.100.10.10:FF:000004">
    <property type="entry name" value="50S ribosomal protein L15"/>
    <property type="match status" value="1"/>
</dbReference>
<dbReference type="Gene3D" id="3.100.10.10">
    <property type="match status" value="1"/>
</dbReference>
<dbReference type="HAMAP" id="MF_01341">
    <property type="entry name" value="Ribosomal_uL15"/>
    <property type="match status" value="1"/>
</dbReference>
<dbReference type="InterPro" id="IPR030878">
    <property type="entry name" value="Ribosomal_uL15"/>
</dbReference>
<dbReference type="InterPro" id="IPR021131">
    <property type="entry name" value="Ribosomal_uL15/eL18"/>
</dbReference>
<dbReference type="InterPro" id="IPR036227">
    <property type="entry name" value="Ribosomal_uL15/eL18_sf"/>
</dbReference>
<dbReference type="InterPro" id="IPR005749">
    <property type="entry name" value="Ribosomal_uL15_bac-type"/>
</dbReference>
<dbReference type="InterPro" id="IPR001196">
    <property type="entry name" value="Ribosomal_uL15_CS"/>
</dbReference>
<dbReference type="NCBIfam" id="TIGR01071">
    <property type="entry name" value="rplO_bact"/>
    <property type="match status" value="1"/>
</dbReference>
<dbReference type="PANTHER" id="PTHR12934">
    <property type="entry name" value="50S RIBOSOMAL PROTEIN L15"/>
    <property type="match status" value="1"/>
</dbReference>
<dbReference type="PANTHER" id="PTHR12934:SF11">
    <property type="entry name" value="LARGE RIBOSOMAL SUBUNIT PROTEIN UL15M"/>
    <property type="match status" value="1"/>
</dbReference>
<dbReference type="Pfam" id="PF00828">
    <property type="entry name" value="Ribosomal_L27A"/>
    <property type="match status" value="1"/>
</dbReference>
<dbReference type="SUPFAM" id="SSF52080">
    <property type="entry name" value="Ribosomal proteins L15p and L18e"/>
    <property type="match status" value="1"/>
</dbReference>
<dbReference type="PROSITE" id="PS00475">
    <property type="entry name" value="RIBOSOMAL_L15"/>
    <property type="match status" value="1"/>
</dbReference>
<comment type="function">
    <text evidence="1">Binds to the 23S rRNA.</text>
</comment>
<comment type="subunit">
    <text evidence="1">Part of the 50S ribosomal subunit.</text>
</comment>
<comment type="similarity">
    <text evidence="1">Belongs to the universal ribosomal protein uL15 family.</text>
</comment>
<keyword id="KW-1185">Reference proteome</keyword>
<keyword id="KW-0687">Ribonucleoprotein</keyword>
<keyword id="KW-0689">Ribosomal protein</keyword>
<keyword id="KW-0694">RNA-binding</keyword>
<keyword id="KW-0699">rRNA-binding</keyword>
<accession>A3CK83</accession>
<name>RL15_STRSV</name>